<protein>
    <recommendedName>
        <fullName>DNA-directed RNA polymerase 132 kDa polypeptide</fullName>
        <ecNumber>2.7.7.6</ecNumber>
    </recommendedName>
</protein>
<dbReference type="EC" id="2.7.7.6"/>
<dbReference type="EMBL" id="AF438165">
    <property type="protein sequence ID" value="AAL73849.1"/>
    <property type="molecule type" value="Genomic_DNA"/>
</dbReference>
<dbReference type="RefSeq" id="NP_570532.1">
    <property type="nucleotide sequence ID" value="NC_003391.1"/>
</dbReference>
<dbReference type="SMR" id="Q8V2N1"/>
<dbReference type="KEGG" id="vg:932669"/>
<dbReference type="Proteomes" id="UP000152221">
    <property type="component" value="Genome"/>
</dbReference>
<dbReference type="GO" id="GO:0000428">
    <property type="term" value="C:DNA-directed RNA polymerase complex"/>
    <property type="evidence" value="ECO:0007669"/>
    <property type="project" value="UniProtKB-KW"/>
</dbReference>
<dbReference type="GO" id="GO:0044423">
    <property type="term" value="C:virion component"/>
    <property type="evidence" value="ECO:0007669"/>
    <property type="project" value="UniProtKB-KW"/>
</dbReference>
<dbReference type="GO" id="GO:0003677">
    <property type="term" value="F:DNA binding"/>
    <property type="evidence" value="ECO:0007669"/>
    <property type="project" value="InterPro"/>
</dbReference>
<dbReference type="GO" id="GO:0003899">
    <property type="term" value="F:DNA-directed RNA polymerase activity"/>
    <property type="evidence" value="ECO:0007669"/>
    <property type="project" value="UniProtKB-EC"/>
</dbReference>
<dbReference type="GO" id="GO:0046872">
    <property type="term" value="F:metal ion binding"/>
    <property type="evidence" value="ECO:0007669"/>
    <property type="project" value="UniProtKB-KW"/>
</dbReference>
<dbReference type="GO" id="GO:0032549">
    <property type="term" value="F:ribonucleoside binding"/>
    <property type="evidence" value="ECO:0007669"/>
    <property type="project" value="InterPro"/>
</dbReference>
<dbReference type="GO" id="GO:0006351">
    <property type="term" value="P:DNA-templated transcription"/>
    <property type="evidence" value="ECO:0007669"/>
    <property type="project" value="InterPro"/>
</dbReference>
<dbReference type="Gene3D" id="2.40.50.150">
    <property type="match status" value="1"/>
</dbReference>
<dbReference type="Gene3D" id="3.90.1100.10">
    <property type="match status" value="2"/>
</dbReference>
<dbReference type="Gene3D" id="2.40.270.10">
    <property type="entry name" value="DNA-directed RNA polymerase, subunit 2, domain 6"/>
    <property type="match status" value="1"/>
</dbReference>
<dbReference type="Gene3D" id="3.90.1800.10">
    <property type="entry name" value="RNA polymerase alpha subunit dimerisation domain"/>
    <property type="match status" value="1"/>
</dbReference>
<dbReference type="InterPro" id="IPR015712">
    <property type="entry name" value="DNA-dir_RNA_pol_su2"/>
</dbReference>
<dbReference type="InterPro" id="IPR007120">
    <property type="entry name" value="DNA-dir_RNAP_su2_dom"/>
</dbReference>
<dbReference type="InterPro" id="IPR037033">
    <property type="entry name" value="DNA-dir_RNAP_su2_hyb_sf"/>
</dbReference>
<dbReference type="InterPro" id="IPR024390">
    <property type="entry name" value="RNA_pol_132_poxvirus"/>
</dbReference>
<dbReference type="InterPro" id="IPR007121">
    <property type="entry name" value="RNA_pol_bsu_CS"/>
</dbReference>
<dbReference type="InterPro" id="IPR007645">
    <property type="entry name" value="RNA_pol_Rpb2_3"/>
</dbReference>
<dbReference type="InterPro" id="IPR007647">
    <property type="entry name" value="RNA_pol_Rpb2_5"/>
</dbReference>
<dbReference type="InterPro" id="IPR007641">
    <property type="entry name" value="RNA_pol_Rpb2_7"/>
</dbReference>
<dbReference type="InterPro" id="IPR014724">
    <property type="entry name" value="RNA_pol_RPB2_OB-fold"/>
</dbReference>
<dbReference type="PANTHER" id="PTHR20856">
    <property type="entry name" value="DNA-DIRECTED RNA POLYMERASE I SUBUNIT 2"/>
    <property type="match status" value="1"/>
</dbReference>
<dbReference type="Pfam" id="PF04565">
    <property type="entry name" value="RNA_pol_Rpb2_3"/>
    <property type="match status" value="1"/>
</dbReference>
<dbReference type="Pfam" id="PF04567">
    <property type="entry name" value="RNA_pol_Rpb2_5"/>
    <property type="match status" value="1"/>
</dbReference>
<dbReference type="Pfam" id="PF00562">
    <property type="entry name" value="RNA_pol_Rpb2_6"/>
    <property type="match status" value="1"/>
</dbReference>
<dbReference type="Pfam" id="PF04560">
    <property type="entry name" value="RNA_pol_Rpb2_7"/>
    <property type="match status" value="1"/>
</dbReference>
<dbReference type="Pfam" id="PF12415">
    <property type="entry name" value="rpo132"/>
    <property type="match status" value="1"/>
</dbReference>
<dbReference type="SUPFAM" id="SSF64484">
    <property type="entry name" value="beta and beta-prime subunits of DNA dependent RNA-polymerase"/>
    <property type="match status" value="1"/>
</dbReference>
<dbReference type="PROSITE" id="PS01166">
    <property type="entry name" value="RNA_POL_BETA"/>
    <property type="match status" value="1"/>
</dbReference>
<keyword id="KW-0240">DNA-directed RNA polymerase</keyword>
<keyword id="KW-0479">Metal-binding</keyword>
<keyword id="KW-0548">Nucleotidyltransferase</keyword>
<keyword id="KW-0804">Transcription</keyword>
<keyword id="KW-0808">Transferase</keyword>
<keyword id="KW-0946">Virion</keyword>
<comment type="function">
    <text evidence="1">Part of the DNA-dependent RNA polymerase which catalyzes the transcription of viral DNA into RNA using the four ribonucleoside triphosphates as substrates. Responsible for the transcription of early, intermediate and late genes. DNA-dependent RNA polymerase associates with the early transcription factor (ETF), itself composed of D6 and A7, thereby allowing the early genes transcription. Late transcription, and probably also intermediate transcription, require newly synthesized RNA polymerase (By similarity).</text>
</comment>
<comment type="catalytic activity">
    <reaction>
        <text>RNA(n) + a ribonucleoside 5'-triphosphate = RNA(n+1) + diphosphate</text>
        <dbReference type="Rhea" id="RHEA:21248"/>
        <dbReference type="Rhea" id="RHEA-COMP:14527"/>
        <dbReference type="Rhea" id="RHEA-COMP:17342"/>
        <dbReference type="ChEBI" id="CHEBI:33019"/>
        <dbReference type="ChEBI" id="CHEBI:61557"/>
        <dbReference type="ChEBI" id="CHEBI:140395"/>
        <dbReference type="EC" id="2.7.7.6"/>
    </reaction>
</comment>
<comment type="subunit">
    <text evidence="1">The DNA-dependent RNA polymerase used for intermediate and late genes expression consists of eight subunits (147) kDa, (133) kDa, (35) kDa, (30) kDa, (22) kDa, (19) kDa, (18) kDa and (7) kDa totalling more than 500 kDa in mass. The same holoenzyme, with the addition of the transcription-specificity factor RAP94, is used for early gene expression (By similarity).</text>
</comment>
<comment type="subcellular location">
    <subcellularLocation>
        <location evidence="1">Virion</location>
    </subcellularLocation>
    <text evidence="1">All the enzymes and other proteins required to synthesize early mRNAs are packaged within the virion core along with the DNA genome. This is necessary because viral early mRNAs are synthesized within minutes after virus entry into the cell and are extruded through pores in the core particle (By similarity).</text>
</comment>
<comment type="similarity">
    <text evidence="2">Belongs to the RNA polymerase beta chain family.</text>
</comment>
<gene>
    <name type="primary">RPO132</name>
    <name type="ordered locus">CMLV142</name>
</gene>
<proteinExistence type="inferred from homology"/>
<reference key="1">
    <citation type="journal article" date="2002" name="Virology">
        <title>The genome of camelpox virus.</title>
        <authorList>
            <person name="Afonso C.L."/>
            <person name="Tulman E.R."/>
            <person name="Lu Z."/>
            <person name="Zsak L."/>
            <person name="Sandybaev N.T."/>
            <person name="Kerembekova U.Z."/>
            <person name="Zaitsev V.L."/>
            <person name="Kutish G.F."/>
            <person name="Rock D.L."/>
        </authorList>
    </citation>
    <scope>NUCLEOTIDE SEQUENCE [LARGE SCALE GENOMIC DNA]</scope>
</reference>
<accession>Q8V2N1</accession>
<organismHost>
    <name type="scientific">Camelus</name>
    <dbReference type="NCBI Taxonomy" id="9836"/>
</organismHost>
<name>RP132_CAMPM</name>
<evidence type="ECO:0000250" key="1"/>
<evidence type="ECO:0000305" key="2"/>
<feature type="chain" id="PRO_0000048063" description="DNA-directed RNA polymerase 132 kDa polypeptide">
    <location>
        <begin position="1"/>
        <end position="1164"/>
    </location>
</feature>
<sequence>MKKNTDSEMDQRLGYKFLVPDPKAGVFYRPLHFQYVSYSNFILHRLHEILTVKRPLLSFKNNTERIMIEISNVKVTPPDYSPIIASIKGKSYDALATFTVNIFKEVMTKEGISITKISSYEGKDSHLIKIPLLIGYGNKNPLDTAKYLVPNVIGGVFINKQSVEKVGINLVEKITTWPKFRVVKPNSFTFSFSSVSPPNVLPTRYRHYKISLDISQLEASNISSTKTFITVNIVLLSQYLSRVSLEFIRRSLSYDMPPEVVYLVNAIIDSAKRLTESITDFNIDTYINDLVEAEHIKQKSQLTINEFKYEMLYNFLPHMNYTPDQLKGFYMISLLRKFLYCIYHTSRYPDRDSMVCHRILTYGKYFETLAHDELENYIGNIRNDIMNNHKNRGTYAVNIHVLTTPGLNHAFSSLLSGKFKKSDGSYRTHPHYSWMQNISIPRSVGFYPDQVKISKMFSVRKYHPSQYLYFCSSDVPERGPQVGLVSQLSVLSSITNILTSEYLDLEKKICEYIRSYYKDDISYFETGFPITIENALVASLNPNMICDFVTDFRRRKRMGFFGNLEVGITLVRDHMNEIRINIGAGRLVRPFLVVDNGELMMDVCPELESRLDDMTFSDIQKEFPHVIEMVDIEQFTFSNVCESVQKFRMMSKDERKQYDLCDFPAEFRDGYVASSLVGINHNSGPRAILGCAQAKQAISCLSSDIRNKIDNGIHLMYPERPIVISKALETSKIAANCFGQHVTIALMSYKGINQEDGIIIKKQFIQRGGLDIVTAKKHQVEIPLENFNNKERDRSNAYSKLESNGLVRLNAFLESGDAMARNISSRTLEDDFARDNQISFDVSEKYTDMYKSRVERVQVELTDKVKVRVLTMKERRPILGDKFTTRTSQKGTVAYIADETELPYDENGITPDVIINSTSIFSRKTISMLIEVILTAAYSVKPYNNKGENRPVCFPSSNETSIDTYMQFAKQCYEHSNPKLSEEELSDKIFCEKILYDPETDKPYGSKVFFGPIYYLRLRHLTQDKATVRCRGKKTKLIRQANEGRKRGGGIKFGEMERDCLIAHGAANTITEVLKDSEEDYQDVYICENCGDIAAQIKSINTCLRCSKLNLSPLLTKIDTTHVSKVFLTQMNARGVKVKLDFERRPPSFYKPLDKVDLKPSFLK</sequence>
<organism>
    <name type="scientific">Camelpox virus (strain M-96)</name>
    <dbReference type="NCBI Taxonomy" id="203173"/>
    <lineage>
        <taxon>Viruses</taxon>
        <taxon>Varidnaviria</taxon>
        <taxon>Bamfordvirae</taxon>
        <taxon>Nucleocytoviricota</taxon>
        <taxon>Pokkesviricetes</taxon>
        <taxon>Chitovirales</taxon>
        <taxon>Poxviridae</taxon>
        <taxon>Chordopoxvirinae</taxon>
        <taxon>Orthopoxvirus</taxon>
        <taxon>Camelpox virus</taxon>
    </lineage>
</organism>